<dbReference type="EMBL" id="AY233461">
    <property type="protein sequence ID" value="AAO89506.1"/>
    <property type="molecule type" value="mRNA"/>
</dbReference>
<dbReference type="RefSeq" id="NP_001012690.1">
    <property type="nucleotide sequence ID" value="NM_001012672.1"/>
</dbReference>
<dbReference type="SMR" id="Q864V4"/>
<dbReference type="FunCoup" id="Q864V4">
    <property type="interactions" value="13"/>
</dbReference>
<dbReference type="STRING" id="9913.ENSBTAP00000041883"/>
<dbReference type="GlyCosmos" id="Q864V4">
    <property type="glycosylation" value="1 site, No reported glycans"/>
</dbReference>
<dbReference type="GlyGen" id="Q864V4">
    <property type="glycosylation" value="1 site"/>
</dbReference>
<dbReference type="PaxDb" id="9913-ENSBTAP00000041883"/>
<dbReference type="Ensembl" id="ENSBTAT00000044381.2">
    <property type="protein sequence ID" value="ENSBTAP00000041883.1"/>
    <property type="gene ID" value="ENSBTAG00000021430.6"/>
</dbReference>
<dbReference type="GeneID" id="282115"/>
<dbReference type="KEGG" id="bta:282115"/>
<dbReference type="CTD" id="105375355"/>
<dbReference type="VEuPathDB" id="HostDB:ENSBTAG00000021430"/>
<dbReference type="VGNC" id="VGNC:107016">
    <property type="gene designation" value="UPK3B"/>
</dbReference>
<dbReference type="eggNOG" id="ENOG502RZJD">
    <property type="taxonomic scope" value="Eukaryota"/>
</dbReference>
<dbReference type="GeneTree" id="ENSGT00940000153392"/>
<dbReference type="HOGENOM" id="CLU_082608_0_0_1"/>
<dbReference type="InParanoid" id="Q864V4"/>
<dbReference type="OMA" id="HFSSLWW"/>
<dbReference type="OrthoDB" id="9939598at2759"/>
<dbReference type="TreeFam" id="TF336628"/>
<dbReference type="Proteomes" id="UP000009136">
    <property type="component" value="Chromosome 25"/>
</dbReference>
<dbReference type="Bgee" id="ENSBTAG00000021430">
    <property type="expression patterns" value="Expressed in urethra and 101 other cell types or tissues"/>
</dbReference>
<dbReference type="GO" id="GO:0016020">
    <property type="term" value="C:membrane"/>
    <property type="evidence" value="ECO:0000318"/>
    <property type="project" value="GO_Central"/>
</dbReference>
<dbReference type="GO" id="GO:0005886">
    <property type="term" value="C:plasma membrane"/>
    <property type="evidence" value="ECO:0007669"/>
    <property type="project" value="UniProtKB-SubCell"/>
</dbReference>
<dbReference type="CDD" id="cd09969">
    <property type="entry name" value="UP_IIIb"/>
    <property type="match status" value="1"/>
</dbReference>
<dbReference type="InterPro" id="IPR024831">
    <property type="entry name" value="Uroplakin-3"/>
</dbReference>
<dbReference type="PANTHER" id="PTHR15446">
    <property type="entry name" value="UROPLAKIN III"/>
    <property type="match status" value="1"/>
</dbReference>
<dbReference type="PANTHER" id="PTHR15446:SF15">
    <property type="entry name" value="UROPLAKIN-3B"/>
    <property type="match status" value="1"/>
</dbReference>
<accession>Q864V4</accession>
<sequence>MGLPSRQPRLWLLLLVVLGWPQPCLTLDLIPYTPRITSWDLEGKVTATTFSLEQPRCVLDRHSSAADTVWLVVAFSNASRVFQNPQTLAEIPASPRLLTDGHYMTLPLTMDQLPCEDPADGSGRAPVLRVGNDAGCLADLHQPRYCNAPLPGPGPYRVKFLLTNSRGSPQAETRWSDLIALRQGKSPGSIDTWPGRRSGDMIIITSILSSLAGLLLLAFLAASSVRFSSLWWPEEAPEQLRIGSFMGKRYMTHHIPPSEAATLPVGCEPGLERFPSLSP</sequence>
<protein>
    <recommendedName>
        <fullName>Uroplakin-3b</fullName>
        <shortName>UP3b</shortName>
    </recommendedName>
    <alternativeName>
        <fullName>Uroplakin IIIb</fullName>
        <shortName>UPIIIb</shortName>
    </alternativeName>
    <alternativeName>
        <fullName>p35</fullName>
    </alternativeName>
</protein>
<comment type="function">
    <text evidence="1">Component of the asymmetric unit membrane (AUM); a highly specialized biomembrane elaborated by terminally differentiated urothelial cells. May play an important role in AUM-cytoskeleton interaction in terminally differentiated urothelial cells. It also contributes to the formation of urothelial glycocalyx which may play an important role in preventing bacterial adherence (By similarity).</text>
</comment>
<comment type="subunit">
    <text>Heterodimer with uroplakin-1B (UPK1B).</text>
</comment>
<comment type="subcellular location">
    <subcellularLocation>
        <location evidence="4">Cell membrane</location>
        <topology evidence="4">Single-pass type I membrane protein</topology>
    </subcellularLocation>
    <text evidence="3">Heterodimer formation with UPK1B is a prerequisite to exit out of the endoplasmic reticulum (ER).</text>
</comment>
<comment type="tissue specificity">
    <text evidence="3">Expression is urothelium-specific.</text>
</comment>
<comment type="similarity">
    <text evidence="4">Belongs to the uroplakin-3 family.</text>
</comment>
<name>UPK3B_BOVIN</name>
<gene>
    <name type="primary">UPK3B</name>
</gene>
<organism>
    <name type="scientific">Bos taurus</name>
    <name type="common">Bovine</name>
    <dbReference type="NCBI Taxonomy" id="9913"/>
    <lineage>
        <taxon>Eukaryota</taxon>
        <taxon>Metazoa</taxon>
        <taxon>Chordata</taxon>
        <taxon>Craniata</taxon>
        <taxon>Vertebrata</taxon>
        <taxon>Euteleostomi</taxon>
        <taxon>Mammalia</taxon>
        <taxon>Eutheria</taxon>
        <taxon>Laurasiatheria</taxon>
        <taxon>Artiodactyla</taxon>
        <taxon>Ruminantia</taxon>
        <taxon>Pecora</taxon>
        <taxon>Bovidae</taxon>
        <taxon>Bovinae</taxon>
        <taxon>Bos</taxon>
    </lineage>
</organism>
<proteinExistence type="evidence at protein level"/>
<reference key="1">
    <citation type="journal article" date="2002" name="J. Cell Biol.">
        <title>Uroplakin IIIb, a urothelial differentiation marker, dimerizes with uroplakin Ib as an early step of urothelial plaque assembly.</title>
        <authorList>
            <person name="Deng F.-M."/>
            <person name="Liang F.-X."/>
            <person name="Tu L."/>
            <person name="Resing K.A."/>
            <person name="Hu P."/>
            <person name="Supino M."/>
            <person name="Hu C.-C.A."/>
            <person name="Zhou G."/>
            <person name="Ding M."/>
            <person name="Kreibich G."/>
            <person name="Sun T.-T."/>
        </authorList>
    </citation>
    <scope>NUCLEOTIDE SEQUENCE [MRNA]</scope>
    <scope>SYNTHESIS OF 58-70; 163-177 AND 268-279</scope>
    <scope>INTERACTION WITH UPK1B</scope>
    <scope>SUBCELLULAR LOCATION</scope>
    <scope>TISSUE SPECIFICITY</scope>
    <source>
        <tissue>Urinary bladder urothelium</tissue>
    </source>
</reference>
<feature type="signal peptide" evidence="2">
    <location>
        <begin position="1"/>
        <end position="26"/>
    </location>
</feature>
<feature type="chain" id="PRO_0000022639" description="Uroplakin-3b">
    <location>
        <begin position="27"/>
        <end position="279"/>
    </location>
</feature>
<feature type="topological domain" description="Lumenal" evidence="2">
    <location>
        <begin position="27"/>
        <end position="200"/>
    </location>
</feature>
<feature type="transmembrane region" description="Helical" evidence="2">
    <location>
        <begin position="201"/>
        <end position="221"/>
    </location>
</feature>
<feature type="topological domain" description="Cytoplasmic" evidence="2">
    <location>
        <begin position="222"/>
        <end position="279"/>
    </location>
</feature>
<feature type="glycosylation site" description="N-linked (GlcNAc...) asparagine" evidence="2">
    <location>
        <position position="77"/>
    </location>
</feature>
<evidence type="ECO:0000250" key="1"/>
<evidence type="ECO:0000255" key="2"/>
<evidence type="ECO:0000269" key="3">
    <source>
    </source>
</evidence>
<evidence type="ECO:0000305" key="4"/>
<keyword id="KW-1003">Cell membrane</keyword>
<keyword id="KW-0325">Glycoprotein</keyword>
<keyword id="KW-0472">Membrane</keyword>
<keyword id="KW-1185">Reference proteome</keyword>
<keyword id="KW-0732">Signal</keyword>
<keyword id="KW-0812">Transmembrane</keyword>
<keyword id="KW-1133">Transmembrane helix</keyword>